<sequence length="139" mass="15609">MHEASYALTIVDTVMEALKKEGLENVKVTKVIIKIGELSLVDPVALRNAFEAYSLGSPLEGAELEIEVVPSKFVCKRCGHEWTFKDVYPELKANIPVIHLYPHLVKDLLKCPKCNSSEVEIVQGTEFVIEGFEYQESNE</sequence>
<organism>
    <name type="scientific">Ignicoccus hospitalis (strain KIN4/I / DSM 18386 / JCM 14125)</name>
    <dbReference type="NCBI Taxonomy" id="453591"/>
    <lineage>
        <taxon>Archaea</taxon>
        <taxon>Thermoproteota</taxon>
        <taxon>Thermoprotei</taxon>
        <taxon>Desulfurococcales</taxon>
        <taxon>Desulfurococcaceae</taxon>
        <taxon>Ignicoccus</taxon>
    </lineage>
</organism>
<keyword id="KW-0479">Metal-binding</keyword>
<keyword id="KW-0533">Nickel</keyword>
<keyword id="KW-1185">Reference proteome</keyword>
<keyword id="KW-0862">Zinc</keyword>
<gene>
    <name evidence="1" type="primary">hypA</name>
    <name type="ordered locus">Igni_0825</name>
</gene>
<evidence type="ECO:0000255" key="1">
    <source>
        <dbReference type="HAMAP-Rule" id="MF_00213"/>
    </source>
</evidence>
<comment type="function">
    <text evidence="1">Involved in the maturation of [NiFe] hydrogenases. Required for nickel insertion into the metal center of the hydrogenase.</text>
</comment>
<comment type="similarity">
    <text evidence="1">Belongs to the HypA/HybF family.</text>
</comment>
<feature type="chain" id="PRO_1000023829" description="Hydrogenase maturation factor HypA">
    <location>
        <begin position="1"/>
        <end position="139"/>
    </location>
</feature>
<feature type="binding site" evidence="1">
    <location>
        <position position="2"/>
    </location>
    <ligand>
        <name>Ni(2+)</name>
        <dbReference type="ChEBI" id="CHEBI:49786"/>
    </ligand>
</feature>
<feature type="binding site" evidence="1">
    <location>
        <position position="75"/>
    </location>
    <ligand>
        <name>Zn(2+)</name>
        <dbReference type="ChEBI" id="CHEBI:29105"/>
    </ligand>
</feature>
<feature type="binding site" evidence="1">
    <location>
        <position position="78"/>
    </location>
    <ligand>
        <name>Zn(2+)</name>
        <dbReference type="ChEBI" id="CHEBI:29105"/>
    </ligand>
</feature>
<feature type="binding site" evidence="1">
    <location>
        <position position="111"/>
    </location>
    <ligand>
        <name>Zn(2+)</name>
        <dbReference type="ChEBI" id="CHEBI:29105"/>
    </ligand>
</feature>
<feature type="binding site" evidence="1">
    <location>
        <position position="114"/>
    </location>
    <ligand>
        <name>Zn(2+)</name>
        <dbReference type="ChEBI" id="CHEBI:29105"/>
    </ligand>
</feature>
<accession>A8AAQ5</accession>
<reference key="1">
    <citation type="journal article" date="2008" name="Genome Biol.">
        <title>A genomic analysis of the archaeal system Ignicoccus hospitalis-Nanoarchaeum equitans.</title>
        <authorList>
            <person name="Podar M."/>
            <person name="Anderson I."/>
            <person name="Makarova K.S."/>
            <person name="Elkins J.G."/>
            <person name="Ivanova N."/>
            <person name="Wall M.A."/>
            <person name="Lykidis A."/>
            <person name="Mavromatis K."/>
            <person name="Sun H."/>
            <person name="Hudson M.E."/>
            <person name="Chen W."/>
            <person name="Deciu C."/>
            <person name="Hutchison D."/>
            <person name="Eads J.R."/>
            <person name="Anderson A."/>
            <person name="Fernandes F."/>
            <person name="Szeto E."/>
            <person name="Lapidus A."/>
            <person name="Kyrpides N.C."/>
            <person name="Saier M.H. Jr."/>
            <person name="Richardson P.M."/>
            <person name="Rachel R."/>
            <person name="Huber H."/>
            <person name="Eisen J.A."/>
            <person name="Koonin E.V."/>
            <person name="Keller M."/>
            <person name="Stetter K.O."/>
        </authorList>
    </citation>
    <scope>NUCLEOTIDE SEQUENCE [LARGE SCALE GENOMIC DNA]</scope>
    <source>
        <strain>KIN4/I / DSM 18386 / JCM 14125</strain>
    </source>
</reference>
<dbReference type="EMBL" id="CP000816">
    <property type="protein sequence ID" value="ABU82007.1"/>
    <property type="molecule type" value="Genomic_DNA"/>
</dbReference>
<dbReference type="RefSeq" id="WP_012122971.1">
    <property type="nucleotide sequence ID" value="NC_009776.1"/>
</dbReference>
<dbReference type="SMR" id="A8AAQ5"/>
<dbReference type="STRING" id="453591.Igni_0825"/>
<dbReference type="GeneID" id="5562494"/>
<dbReference type="KEGG" id="iho:Igni_0825"/>
<dbReference type="eggNOG" id="arCOG04426">
    <property type="taxonomic scope" value="Archaea"/>
</dbReference>
<dbReference type="HOGENOM" id="CLU_126929_3_0_2"/>
<dbReference type="OrthoDB" id="36835at2157"/>
<dbReference type="PhylomeDB" id="A8AAQ5"/>
<dbReference type="Proteomes" id="UP000000262">
    <property type="component" value="Chromosome"/>
</dbReference>
<dbReference type="GO" id="GO:0016151">
    <property type="term" value="F:nickel cation binding"/>
    <property type="evidence" value="ECO:0007669"/>
    <property type="project" value="UniProtKB-UniRule"/>
</dbReference>
<dbReference type="GO" id="GO:0008270">
    <property type="term" value="F:zinc ion binding"/>
    <property type="evidence" value="ECO:0007669"/>
    <property type="project" value="UniProtKB-UniRule"/>
</dbReference>
<dbReference type="GO" id="GO:0051604">
    <property type="term" value="P:protein maturation"/>
    <property type="evidence" value="ECO:0007669"/>
    <property type="project" value="InterPro"/>
</dbReference>
<dbReference type="GO" id="GO:0036211">
    <property type="term" value="P:protein modification process"/>
    <property type="evidence" value="ECO:0007669"/>
    <property type="project" value="UniProtKB-UniRule"/>
</dbReference>
<dbReference type="Gene3D" id="3.30.2320.80">
    <property type="match status" value="1"/>
</dbReference>
<dbReference type="HAMAP" id="MF_00213">
    <property type="entry name" value="HypA_HybF"/>
    <property type="match status" value="1"/>
</dbReference>
<dbReference type="InterPro" id="IPR020538">
    <property type="entry name" value="Hydgase_Ni_incorp_HypA/HybF_CS"/>
</dbReference>
<dbReference type="InterPro" id="IPR000688">
    <property type="entry name" value="HypA/HybF"/>
</dbReference>
<dbReference type="PANTHER" id="PTHR34535">
    <property type="entry name" value="HYDROGENASE MATURATION FACTOR HYPA"/>
    <property type="match status" value="1"/>
</dbReference>
<dbReference type="PANTHER" id="PTHR34535:SF3">
    <property type="entry name" value="HYDROGENASE MATURATION FACTOR HYPA"/>
    <property type="match status" value="1"/>
</dbReference>
<dbReference type="Pfam" id="PF01155">
    <property type="entry name" value="HypA"/>
    <property type="match status" value="1"/>
</dbReference>
<dbReference type="PIRSF" id="PIRSF004761">
    <property type="entry name" value="Hydrgn_mat_HypA"/>
    <property type="match status" value="1"/>
</dbReference>
<dbReference type="PROSITE" id="PS01249">
    <property type="entry name" value="HYPA"/>
    <property type="match status" value="1"/>
</dbReference>
<name>HYPA_IGNH4</name>
<protein>
    <recommendedName>
        <fullName evidence="1">Hydrogenase maturation factor HypA</fullName>
    </recommendedName>
</protein>
<proteinExistence type="inferred from homology"/>